<evidence type="ECO:0000305" key="1"/>
<keyword id="KW-1185">Reference proteome</keyword>
<protein>
    <recommendedName>
        <fullName>UPF0231 protein YacL</fullName>
    </recommendedName>
</protein>
<accession>P59396</accession>
<proteinExistence type="inferred from homology"/>
<feature type="chain" id="PRO_0000214658" description="UPF0231 protein YacL">
    <location>
        <begin position="1"/>
        <end position="120"/>
    </location>
</feature>
<comment type="similarity">
    <text evidence="1">Belongs to the UPF0231 family.</text>
</comment>
<comment type="sequence caution" evidence="1">
    <conflict type="erroneous initiation">
        <sequence resource="EMBL-CDS" id="AAN41779"/>
    </conflict>
</comment>
<comment type="sequence caution" evidence="1">
    <conflict type="erroneous initiation">
        <sequence resource="EMBL-CDS" id="AAP15660"/>
    </conflict>
</comment>
<sequence>MDYEFLRDITGVVKVRMSMGHEVVGHWFNEEVKENLALLDEVEQAAHALKGSERSWQRAGHEYTLWMDAEEVMVRANQLEFAGDEMEEGMNYYDEESLSLCGVEDFLQVVAAYRNFVQQK</sequence>
<gene>
    <name type="primary">yacL</name>
    <name type="ordered locus">SF0116</name>
    <name type="ordered locus">S0118</name>
</gene>
<reference key="1">
    <citation type="journal article" date="2002" name="Nucleic Acids Res.">
        <title>Genome sequence of Shigella flexneri 2a: insights into pathogenicity through comparison with genomes of Escherichia coli K12 and O157.</title>
        <authorList>
            <person name="Jin Q."/>
            <person name="Yuan Z."/>
            <person name="Xu J."/>
            <person name="Wang Y."/>
            <person name="Shen Y."/>
            <person name="Lu W."/>
            <person name="Wang J."/>
            <person name="Liu H."/>
            <person name="Yang J."/>
            <person name="Yang F."/>
            <person name="Zhang X."/>
            <person name="Zhang J."/>
            <person name="Yang G."/>
            <person name="Wu H."/>
            <person name="Qu D."/>
            <person name="Dong J."/>
            <person name="Sun L."/>
            <person name="Xue Y."/>
            <person name="Zhao A."/>
            <person name="Gao Y."/>
            <person name="Zhu J."/>
            <person name="Kan B."/>
            <person name="Ding K."/>
            <person name="Chen S."/>
            <person name="Cheng H."/>
            <person name="Yao Z."/>
            <person name="He B."/>
            <person name="Chen R."/>
            <person name="Ma D."/>
            <person name="Qiang B."/>
            <person name="Wen Y."/>
            <person name="Hou Y."/>
            <person name="Yu J."/>
        </authorList>
    </citation>
    <scope>NUCLEOTIDE SEQUENCE [LARGE SCALE GENOMIC DNA]</scope>
    <source>
        <strain>301 / Serotype 2a</strain>
    </source>
</reference>
<reference key="2">
    <citation type="journal article" date="2003" name="Infect. Immun.">
        <title>Complete genome sequence and comparative genomics of Shigella flexneri serotype 2a strain 2457T.</title>
        <authorList>
            <person name="Wei J."/>
            <person name="Goldberg M.B."/>
            <person name="Burland V."/>
            <person name="Venkatesan M.M."/>
            <person name="Deng W."/>
            <person name="Fournier G."/>
            <person name="Mayhew G.F."/>
            <person name="Plunkett G. III"/>
            <person name="Rose D.J."/>
            <person name="Darling A."/>
            <person name="Mau B."/>
            <person name="Perna N.T."/>
            <person name="Payne S.M."/>
            <person name="Runyen-Janecky L.J."/>
            <person name="Zhou S."/>
            <person name="Schwartz D.C."/>
            <person name="Blattner F.R."/>
        </authorList>
    </citation>
    <scope>NUCLEOTIDE SEQUENCE [LARGE SCALE GENOMIC DNA]</scope>
    <source>
        <strain>ATCC 700930 / 2457T / Serotype 2a</strain>
    </source>
</reference>
<name>YACL_SHIFL</name>
<organism>
    <name type="scientific">Shigella flexneri</name>
    <dbReference type="NCBI Taxonomy" id="623"/>
    <lineage>
        <taxon>Bacteria</taxon>
        <taxon>Pseudomonadati</taxon>
        <taxon>Pseudomonadota</taxon>
        <taxon>Gammaproteobacteria</taxon>
        <taxon>Enterobacterales</taxon>
        <taxon>Enterobacteriaceae</taxon>
        <taxon>Shigella</taxon>
    </lineage>
</organism>
<dbReference type="EMBL" id="AE005674">
    <property type="protein sequence ID" value="AAN41779.1"/>
    <property type="status" value="ALT_INIT"/>
    <property type="molecule type" value="Genomic_DNA"/>
</dbReference>
<dbReference type="EMBL" id="AE014073">
    <property type="protein sequence ID" value="AAP15660.1"/>
    <property type="status" value="ALT_INIT"/>
    <property type="molecule type" value="Genomic_DNA"/>
</dbReference>
<dbReference type="RefSeq" id="NP_706072.3">
    <property type="nucleotide sequence ID" value="NC_004337.2"/>
</dbReference>
<dbReference type="RefSeq" id="WP_005053505.1">
    <property type="nucleotide sequence ID" value="NZ_WPGW01000007.1"/>
</dbReference>
<dbReference type="STRING" id="198214.SF0116"/>
<dbReference type="PaxDb" id="198214-SF0116"/>
<dbReference type="GeneID" id="1024484"/>
<dbReference type="KEGG" id="sfl:SF0116"/>
<dbReference type="KEGG" id="sfx:S0118"/>
<dbReference type="PATRIC" id="fig|198214.7.peg.132"/>
<dbReference type="HOGENOM" id="CLU_139226_0_0_6"/>
<dbReference type="Proteomes" id="UP000001006">
    <property type="component" value="Chromosome"/>
</dbReference>
<dbReference type="Proteomes" id="UP000002673">
    <property type="component" value="Chromosome"/>
</dbReference>
<dbReference type="HAMAP" id="MF_01053">
    <property type="entry name" value="UPF0231"/>
    <property type="match status" value="1"/>
</dbReference>
<dbReference type="InterPro" id="IPR008249">
    <property type="entry name" value="UPF0231"/>
</dbReference>
<dbReference type="NCBIfam" id="NF003574">
    <property type="entry name" value="PRK05248.1-1"/>
    <property type="match status" value="1"/>
</dbReference>
<dbReference type="NCBIfam" id="NF003576">
    <property type="entry name" value="PRK05248.1-3"/>
    <property type="match status" value="1"/>
</dbReference>
<dbReference type="Pfam" id="PF06062">
    <property type="entry name" value="UPF0231"/>
    <property type="match status" value="1"/>
</dbReference>
<dbReference type="PIRSF" id="PIRSF006287">
    <property type="entry name" value="UCP006287"/>
    <property type="match status" value="1"/>
</dbReference>